<evidence type="ECO:0000255" key="1">
    <source>
        <dbReference type="HAMAP-Rule" id="MF_00072"/>
    </source>
</evidence>
<protein>
    <recommendedName>
        <fullName evidence="1">Peptide chain release factor 3</fullName>
        <shortName evidence="1">RF-3</shortName>
    </recommendedName>
</protein>
<accession>Q30V54</accession>
<reference key="1">
    <citation type="journal article" date="2011" name="J. Bacteriol.">
        <title>Complete genome sequence and updated annotation of Desulfovibrio alaskensis G20.</title>
        <authorList>
            <person name="Hauser L.J."/>
            <person name="Land M.L."/>
            <person name="Brown S.D."/>
            <person name="Larimer F."/>
            <person name="Keller K.L."/>
            <person name="Rapp-Giles B.J."/>
            <person name="Price M.N."/>
            <person name="Lin M."/>
            <person name="Bruce D.C."/>
            <person name="Detter J.C."/>
            <person name="Tapia R."/>
            <person name="Han C.S."/>
            <person name="Goodwin L.A."/>
            <person name="Cheng J.F."/>
            <person name="Pitluck S."/>
            <person name="Copeland A."/>
            <person name="Lucas S."/>
            <person name="Nolan M."/>
            <person name="Lapidus A.L."/>
            <person name="Palumbo A.V."/>
            <person name="Wall J.D."/>
        </authorList>
    </citation>
    <scope>NUCLEOTIDE SEQUENCE [LARGE SCALE GENOMIC DNA]</scope>
    <source>
        <strain>ATCC BAA-1058 / DSM 17464 / G20</strain>
    </source>
</reference>
<comment type="function">
    <text evidence="1">Increases the formation of ribosomal termination complexes and stimulates activities of RF-1 and RF-2. It binds guanine nucleotides and has strong preference for UGA stop codons. It may interact directly with the ribosome. The stimulation of RF-1 and RF-2 is significantly reduced by GTP and GDP, but not by GMP.</text>
</comment>
<comment type="subcellular location">
    <subcellularLocation>
        <location evidence="1">Cytoplasm</location>
    </subcellularLocation>
</comment>
<comment type="similarity">
    <text evidence="1">Belongs to the TRAFAC class translation factor GTPase superfamily. Classic translation factor GTPase family. PrfC subfamily.</text>
</comment>
<organism>
    <name type="scientific">Oleidesulfovibrio alaskensis (strain ATCC BAA-1058 / DSM 17464 / G20)</name>
    <name type="common">Desulfovibrio alaskensis</name>
    <dbReference type="NCBI Taxonomy" id="207559"/>
    <lineage>
        <taxon>Bacteria</taxon>
        <taxon>Pseudomonadati</taxon>
        <taxon>Thermodesulfobacteriota</taxon>
        <taxon>Desulfovibrionia</taxon>
        <taxon>Desulfovibrionales</taxon>
        <taxon>Desulfovibrionaceae</taxon>
        <taxon>Oleidesulfovibrio</taxon>
    </lineage>
</organism>
<dbReference type="EMBL" id="CP000112">
    <property type="protein sequence ID" value="ABB40442.1"/>
    <property type="molecule type" value="Genomic_DNA"/>
</dbReference>
<dbReference type="RefSeq" id="WP_011369317.1">
    <property type="nucleotide sequence ID" value="NC_007519.1"/>
</dbReference>
<dbReference type="SMR" id="Q30V54"/>
<dbReference type="STRING" id="207559.Dde_3649"/>
<dbReference type="KEGG" id="dde:Dde_3649"/>
<dbReference type="eggNOG" id="COG4108">
    <property type="taxonomic scope" value="Bacteria"/>
</dbReference>
<dbReference type="HOGENOM" id="CLU_002794_2_1_7"/>
<dbReference type="Proteomes" id="UP000002710">
    <property type="component" value="Chromosome"/>
</dbReference>
<dbReference type="GO" id="GO:0005829">
    <property type="term" value="C:cytosol"/>
    <property type="evidence" value="ECO:0007669"/>
    <property type="project" value="TreeGrafter"/>
</dbReference>
<dbReference type="GO" id="GO:0005525">
    <property type="term" value="F:GTP binding"/>
    <property type="evidence" value="ECO:0007669"/>
    <property type="project" value="UniProtKB-UniRule"/>
</dbReference>
<dbReference type="GO" id="GO:0003924">
    <property type="term" value="F:GTPase activity"/>
    <property type="evidence" value="ECO:0007669"/>
    <property type="project" value="InterPro"/>
</dbReference>
<dbReference type="GO" id="GO:0016150">
    <property type="term" value="F:translation release factor activity, codon nonspecific"/>
    <property type="evidence" value="ECO:0007669"/>
    <property type="project" value="TreeGrafter"/>
</dbReference>
<dbReference type="GO" id="GO:0016149">
    <property type="term" value="F:translation release factor activity, codon specific"/>
    <property type="evidence" value="ECO:0007669"/>
    <property type="project" value="UniProtKB-UniRule"/>
</dbReference>
<dbReference type="GO" id="GO:0006449">
    <property type="term" value="P:regulation of translational termination"/>
    <property type="evidence" value="ECO:0007669"/>
    <property type="project" value="UniProtKB-UniRule"/>
</dbReference>
<dbReference type="CDD" id="cd04169">
    <property type="entry name" value="RF3"/>
    <property type="match status" value="1"/>
</dbReference>
<dbReference type="CDD" id="cd03689">
    <property type="entry name" value="RF3_II"/>
    <property type="match status" value="1"/>
</dbReference>
<dbReference type="CDD" id="cd16259">
    <property type="entry name" value="RF3_III"/>
    <property type="match status" value="1"/>
</dbReference>
<dbReference type="FunFam" id="2.40.30.10:FF:000040">
    <property type="entry name" value="Peptide chain release factor 3"/>
    <property type="match status" value="1"/>
</dbReference>
<dbReference type="FunFam" id="3.30.70.3280:FF:000001">
    <property type="entry name" value="Peptide chain release factor 3"/>
    <property type="match status" value="1"/>
</dbReference>
<dbReference type="FunFam" id="3.40.50.300:FF:000542">
    <property type="entry name" value="Peptide chain release factor 3"/>
    <property type="match status" value="1"/>
</dbReference>
<dbReference type="Gene3D" id="3.40.50.300">
    <property type="entry name" value="P-loop containing nucleotide triphosphate hydrolases"/>
    <property type="match status" value="2"/>
</dbReference>
<dbReference type="Gene3D" id="3.30.70.3280">
    <property type="entry name" value="Peptide chain release factor 3, domain III"/>
    <property type="match status" value="1"/>
</dbReference>
<dbReference type="HAMAP" id="MF_00072">
    <property type="entry name" value="Rel_fac_3"/>
    <property type="match status" value="1"/>
</dbReference>
<dbReference type="InterPro" id="IPR053905">
    <property type="entry name" value="EF-G-like_DII"/>
</dbReference>
<dbReference type="InterPro" id="IPR035647">
    <property type="entry name" value="EFG_III/V"/>
</dbReference>
<dbReference type="InterPro" id="IPR031157">
    <property type="entry name" value="G_TR_CS"/>
</dbReference>
<dbReference type="InterPro" id="IPR027417">
    <property type="entry name" value="P-loop_NTPase"/>
</dbReference>
<dbReference type="InterPro" id="IPR004548">
    <property type="entry name" value="PrfC"/>
</dbReference>
<dbReference type="InterPro" id="IPR032090">
    <property type="entry name" value="RF3_C"/>
</dbReference>
<dbReference type="InterPro" id="IPR038467">
    <property type="entry name" value="RF3_dom_3_sf"/>
</dbReference>
<dbReference type="InterPro" id="IPR041732">
    <property type="entry name" value="RF3_GTP-bd"/>
</dbReference>
<dbReference type="InterPro" id="IPR005225">
    <property type="entry name" value="Small_GTP-bd"/>
</dbReference>
<dbReference type="InterPro" id="IPR000795">
    <property type="entry name" value="T_Tr_GTP-bd_dom"/>
</dbReference>
<dbReference type="InterPro" id="IPR009000">
    <property type="entry name" value="Transl_B-barrel_sf"/>
</dbReference>
<dbReference type="NCBIfam" id="TIGR00503">
    <property type="entry name" value="prfC"/>
    <property type="match status" value="1"/>
</dbReference>
<dbReference type="NCBIfam" id="NF001964">
    <property type="entry name" value="PRK00741.1"/>
    <property type="match status" value="1"/>
</dbReference>
<dbReference type="NCBIfam" id="TIGR00231">
    <property type="entry name" value="small_GTP"/>
    <property type="match status" value="1"/>
</dbReference>
<dbReference type="PANTHER" id="PTHR43556">
    <property type="entry name" value="PEPTIDE CHAIN RELEASE FACTOR RF3"/>
    <property type="match status" value="1"/>
</dbReference>
<dbReference type="PANTHER" id="PTHR43556:SF2">
    <property type="entry name" value="PEPTIDE CHAIN RELEASE FACTOR RF3"/>
    <property type="match status" value="1"/>
</dbReference>
<dbReference type="Pfam" id="PF22042">
    <property type="entry name" value="EF-G_D2"/>
    <property type="match status" value="1"/>
</dbReference>
<dbReference type="Pfam" id="PF00009">
    <property type="entry name" value="GTP_EFTU"/>
    <property type="match status" value="1"/>
</dbReference>
<dbReference type="Pfam" id="PF16658">
    <property type="entry name" value="RF3_C"/>
    <property type="match status" value="1"/>
</dbReference>
<dbReference type="PRINTS" id="PR00315">
    <property type="entry name" value="ELONGATNFCT"/>
</dbReference>
<dbReference type="SUPFAM" id="SSF54980">
    <property type="entry name" value="EF-G C-terminal domain-like"/>
    <property type="match status" value="1"/>
</dbReference>
<dbReference type="SUPFAM" id="SSF52540">
    <property type="entry name" value="P-loop containing nucleoside triphosphate hydrolases"/>
    <property type="match status" value="1"/>
</dbReference>
<dbReference type="SUPFAM" id="SSF50447">
    <property type="entry name" value="Translation proteins"/>
    <property type="match status" value="1"/>
</dbReference>
<dbReference type="PROSITE" id="PS00301">
    <property type="entry name" value="G_TR_1"/>
    <property type="match status" value="1"/>
</dbReference>
<dbReference type="PROSITE" id="PS51722">
    <property type="entry name" value="G_TR_2"/>
    <property type="match status" value="1"/>
</dbReference>
<proteinExistence type="inferred from homology"/>
<feature type="chain" id="PRO_0000242174" description="Peptide chain release factor 3">
    <location>
        <begin position="1"/>
        <end position="528"/>
    </location>
</feature>
<feature type="domain" description="tr-type G">
    <location>
        <begin position="10"/>
        <end position="278"/>
    </location>
</feature>
<feature type="binding site" evidence="1">
    <location>
        <begin position="19"/>
        <end position="26"/>
    </location>
    <ligand>
        <name>GTP</name>
        <dbReference type="ChEBI" id="CHEBI:37565"/>
    </ligand>
</feature>
<feature type="binding site" evidence="1">
    <location>
        <begin position="87"/>
        <end position="91"/>
    </location>
    <ligand>
        <name>GTP</name>
        <dbReference type="ChEBI" id="CHEBI:37565"/>
    </ligand>
</feature>
<feature type="binding site" evidence="1">
    <location>
        <begin position="141"/>
        <end position="144"/>
    </location>
    <ligand>
        <name>GTP</name>
        <dbReference type="ChEBI" id="CHEBI:37565"/>
    </ligand>
</feature>
<gene>
    <name evidence="1" type="primary">prfC</name>
    <name type="ordered locus">Dde_3649</name>
</gene>
<keyword id="KW-0963">Cytoplasm</keyword>
<keyword id="KW-0342">GTP-binding</keyword>
<keyword id="KW-0547">Nucleotide-binding</keyword>
<keyword id="KW-0648">Protein biosynthesis</keyword>
<keyword id="KW-1185">Reference proteome</keyword>
<name>RF3_OLEA2</name>
<sequence>MNREHQREVDKRRTFGIISHPDAGKTTLTEKLLLFGGAIQMAGTVKSRKAARHATSDWMAMEQERGISVTTSVMKFHHNGYEINLLDTPGHQDFSEDTYRVLTAVDSALLVIDSAKGVEAQTLKLMDVCRMRSTPIVTFINKLDRDGLHPLEVMDDIESRLNIQCSPLTWPIGMGADFKGTWDIRTGRLHMFTPANDGRIASGRIIEGLDNPELDEALGEQAVTLRDELALLAEAGNPFDKERYLKGELTPVFFGSAINNFGVREMLDTFVDLAPAPQPRPATTRTVSPYEEDFSGVVFKIQANMDKNHRDRIAFMRICSGKFTRGMKVRHHRIGKEVALANATIFMAQDRTGVEEAWPGDIIGIHNHGTIKIGDTFSLREPLKFVGIPNFAPEHFRRVVLRDPMKAKQLQKGLEQLAEEGAVQLFRPLLGNDYILGAVGVLQFEVIVARLKDEYNVNALYEGCNITTARWLHTDDPKTMAEFRDYYRSELAMDAEGCLAYLAPNPWRLESAVERYPKMEFRTTREIS</sequence>